<keyword id="KW-0002">3D-structure</keyword>
<keyword id="KW-0256">Endoplasmic reticulum</keyword>
<keyword id="KW-0378">Hydrolase</keyword>
<keyword id="KW-0464">Manganese</keyword>
<keyword id="KW-0479">Metal-binding</keyword>
<keyword id="KW-0659">Purine metabolism</keyword>
<keyword id="KW-1185">Reference proteome</keyword>
<keyword id="KW-0732">Signal</keyword>
<dbReference type="EC" id="3.5.3.26" evidence="2 3 4"/>
<dbReference type="EMBL" id="GQ303359">
    <property type="protein sequence ID" value="ADH04164.1"/>
    <property type="molecule type" value="mRNA"/>
</dbReference>
<dbReference type="EMBL" id="Z97342">
    <property type="protein sequence ID" value="CAB10485.1"/>
    <property type="status" value="ALT_SEQ"/>
    <property type="molecule type" value="Genomic_DNA"/>
</dbReference>
<dbReference type="EMBL" id="AL161545">
    <property type="protein sequence ID" value="CAB80976.1"/>
    <property type="status" value="ALT_SEQ"/>
    <property type="molecule type" value="Genomic_DNA"/>
</dbReference>
<dbReference type="EMBL" id="CP002687">
    <property type="protein sequence ID" value="AEE83843.1"/>
    <property type="molecule type" value="Genomic_DNA"/>
</dbReference>
<dbReference type="EMBL" id="AK118019">
    <property type="protein sequence ID" value="BAC42652.1"/>
    <property type="molecule type" value="mRNA"/>
</dbReference>
<dbReference type="EMBL" id="AK176787">
    <property type="protein sequence ID" value="BAD44550.1"/>
    <property type="molecule type" value="mRNA"/>
</dbReference>
<dbReference type="EMBL" id="AK175872">
    <property type="protein sequence ID" value="BAD43635.1"/>
    <property type="molecule type" value="mRNA"/>
</dbReference>
<dbReference type="PIR" id="H71438">
    <property type="entry name" value="H71438"/>
</dbReference>
<dbReference type="RefSeq" id="NP_193438.2">
    <property type="nucleotide sequence ID" value="NM_117809.6"/>
</dbReference>
<dbReference type="PDB" id="4E2Q">
    <property type="method" value="X-ray"/>
    <property type="resolution" value="2.50 A"/>
    <property type="chains" value="A/B/C/D/E/F/G/H/I/J/K/L/M/N/O/P=36-298"/>
</dbReference>
<dbReference type="PDB" id="4E2S">
    <property type="method" value="X-ray"/>
    <property type="resolution" value="2.59 A"/>
    <property type="chains" value="A/B/C/D/E/F/G/H/I/J/K/L/M/N/O/P=36-298"/>
</dbReference>
<dbReference type="PDBsum" id="4E2Q"/>
<dbReference type="PDBsum" id="4E2S"/>
<dbReference type="SMR" id="Q8GXV5"/>
<dbReference type="FunCoup" id="Q8GXV5">
    <property type="interactions" value="457"/>
</dbReference>
<dbReference type="STRING" id="3702.Q8GXV5"/>
<dbReference type="GlyGen" id="Q8GXV5">
    <property type="glycosylation" value="1 site"/>
</dbReference>
<dbReference type="iPTMnet" id="Q8GXV5"/>
<dbReference type="PaxDb" id="3702-AT4G17050.1"/>
<dbReference type="ProteomicsDB" id="245264"/>
<dbReference type="EnsemblPlants" id="AT4G17050.1">
    <property type="protein sequence ID" value="AT4G17050.1"/>
    <property type="gene ID" value="AT4G17050"/>
</dbReference>
<dbReference type="GeneID" id="827413"/>
<dbReference type="Gramene" id="AT4G17050.1">
    <property type="protein sequence ID" value="AT4G17050.1"/>
    <property type="gene ID" value="AT4G17050"/>
</dbReference>
<dbReference type="KEGG" id="ath:AT4G17050"/>
<dbReference type="Araport" id="AT4G17050"/>
<dbReference type="TAIR" id="AT4G17050">
    <property type="gene designation" value="UGLYAH"/>
</dbReference>
<dbReference type="eggNOG" id="ENOG502QS1M">
    <property type="taxonomic scope" value="Eukaryota"/>
</dbReference>
<dbReference type="HOGENOM" id="CLU_056083_1_0_1"/>
<dbReference type="InParanoid" id="Q8GXV5"/>
<dbReference type="OMA" id="DVRHDMH"/>
<dbReference type="PhylomeDB" id="Q8GXV5"/>
<dbReference type="BioCyc" id="ARA:AT4G17050-MONOMER"/>
<dbReference type="BioCyc" id="MetaCyc:AT4G17050-MONOMER"/>
<dbReference type="BRENDA" id="3.5.3.26">
    <property type="organism ID" value="399"/>
</dbReference>
<dbReference type="EvolutionaryTrace" id="Q8GXV5"/>
<dbReference type="PRO" id="PR:Q8GXV5"/>
<dbReference type="Proteomes" id="UP000006548">
    <property type="component" value="Chromosome 4"/>
</dbReference>
<dbReference type="ExpressionAtlas" id="Q8GXV5">
    <property type="expression patterns" value="baseline and differential"/>
</dbReference>
<dbReference type="GO" id="GO:0005829">
    <property type="term" value="C:cytosol"/>
    <property type="evidence" value="ECO:0007005"/>
    <property type="project" value="TAIR"/>
</dbReference>
<dbReference type="GO" id="GO:0005783">
    <property type="term" value="C:endoplasmic reticulum"/>
    <property type="evidence" value="ECO:0007669"/>
    <property type="project" value="UniProtKB-SubCell"/>
</dbReference>
<dbReference type="GO" id="GO:0003700">
    <property type="term" value="F:DNA-binding transcription factor activity"/>
    <property type="evidence" value="ECO:0000250"/>
    <property type="project" value="TAIR"/>
</dbReference>
<dbReference type="GO" id="GO:0046872">
    <property type="term" value="F:metal ion binding"/>
    <property type="evidence" value="ECO:0007669"/>
    <property type="project" value="UniProtKB-KW"/>
</dbReference>
<dbReference type="GO" id="GO:0071522">
    <property type="term" value="F:ureidoglycine aminohydrolase activity"/>
    <property type="evidence" value="ECO:0000314"/>
    <property type="project" value="TAIR"/>
</dbReference>
<dbReference type="GO" id="GO:0000256">
    <property type="term" value="P:allantoin catabolic process"/>
    <property type="evidence" value="ECO:0000314"/>
    <property type="project" value="TAIR"/>
</dbReference>
<dbReference type="GO" id="GO:0006145">
    <property type="term" value="P:purine nucleobase catabolic process"/>
    <property type="evidence" value="ECO:0000314"/>
    <property type="project" value="TAIR"/>
</dbReference>
<dbReference type="GO" id="GO:0006355">
    <property type="term" value="P:regulation of DNA-templated transcription"/>
    <property type="evidence" value="ECO:0000304"/>
    <property type="project" value="TAIR"/>
</dbReference>
<dbReference type="GO" id="GO:0010136">
    <property type="term" value="P:ureide catabolic process"/>
    <property type="evidence" value="ECO:0000314"/>
    <property type="project" value="TAIR"/>
</dbReference>
<dbReference type="CDD" id="cd02212">
    <property type="entry name" value="cupin_UGlyAH_C"/>
    <property type="match status" value="1"/>
</dbReference>
<dbReference type="CDD" id="cd02211">
    <property type="entry name" value="cupin_UGlyAH_N"/>
    <property type="match status" value="1"/>
</dbReference>
<dbReference type="FunFam" id="2.60.120.10:FF:000137">
    <property type="entry name" value="(S)-ureidoglycine aminohydrolase"/>
    <property type="match status" value="1"/>
</dbReference>
<dbReference type="Gene3D" id="2.60.120.10">
    <property type="entry name" value="Jelly Rolls"/>
    <property type="match status" value="1"/>
</dbReference>
<dbReference type="InterPro" id="IPR013096">
    <property type="entry name" value="Cupin_2"/>
</dbReference>
<dbReference type="InterPro" id="IPR014710">
    <property type="entry name" value="RmlC-like_jellyroll"/>
</dbReference>
<dbReference type="InterPro" id="IPR011051">
    <property type="entry name" value="RmlC_Cupin_sf"/>
</dbReference>
<dbReference type="InterPro" id="IPR017627">
    <property type="entry name" value="UGHY"/>
</dbReference>
<dbReference type="InterPro" id="IPR044697">
    <property type="entry name" value="UGlyAH_cupin_C"/>
</dbReference>
<dbReference type="InterPro" id="IPR044704">
    <property type="entry name" value="UGlyAH_cupin_N"/>
</dbReference>
<dbReference type="NCBIfam" id="TIGR03214">
    <property type="entry name" value="ura-cupin"/>
    <property type="match status" value="1"/>
</dbReference>
<dbReference type="PANTHER" id="PTHR34571">
    <property type="entry name" value="(S)-UREIDOGLYCINE AMINOHYDROLASE"/>
    <property type="match status" value="1"/>
</dbReference>
<dbReference type="PANTHER" id="PTHR34571:SF1">
    <property type="entry name" value="(S)-UREIDOGLYCINE AMINOHYDROLASE"/>
    <property type="match status" value="1"/>
</dbReference>
<dbReference type="Pfam" id="PF07883">
    <property type="entry name" value="Cupin_2"/>
    <property type="match status" value="1"/>
</dbReference>
<dbReference type="SUPFAM" id="SSF51182">
    <property type="entry name" value="RmlC-like cupins"/>
    <property type="match status" value="1"/>
</dbReference>
<gene>
    <name type="primary">UGLYAH</name>
    <name type="synonym">UGHY</name>
    <name type="synonym">YlbA</name>
    <name type="ordered locus">At4g17050</name>
    <name type="ORF">dl4555w</name>
    <name type="ORF">FCAALL.343</name>
</gene>
<name>UGHY_ARATH</name>
<evidence type="ECO:0000255" key="1"/>
<evidence type="ECO:0000269" key="2">
    <source>
    </source>
</evidence>
<evidence type="ECO:0000269" key="3">
    <source>
    </source>
</evidence>
<evidence type="ECO:0000269" key="4">
    <source>
    </source>
</evidence>
<evidence type="ECO:0000303" key="5">
    <source>
    </source>
</evidence>
<evidence type="ECO:0000305" key="6"/>
<evidence type="ECO:0007829" key="7">
    <source>
        <dbReference type="PDB" id="4E2Q"/>
    </source>
</evidence>
<reference key="1">
    <citation type="journal article" date="2010" name="ACS Chem. Biol.">
        <title>Chemical basis of nitrogen recovery through the ureide pathway: formation and hydrolysis of S-ureidoglycine in plants and bacteria.</title>
        <authorList>
            <person name="Serventi F."/>
            <person name="Ramazzina I."/>
            <person name="Lamberto I."/>
            <person name="Puggioni V."/>
            <person name="Gatti R."/>
            <person name="Percudani R."/>
        </authorList>
    </citation>
    <scope>NUCLEOTIDE SEQUENCE [MRNA]</scope>
    <scope>FUNCTION</scope>
    <scope>CATALYTIC ACTIVITY</scope>
    <scope>COFACTOR</scope>
    <scope>SUBCELLULAR LOCATION</scope>
</reference>
<reference key="2">
    <citation type="journal article" date="1998" name="Nature">
        <title>Analysis of 1.9 Mb of contiguous sequence from chromosome 4 of Arabidopsis thaliana.</title>
        <authorList>
            <person name="Bevan M."/>
            <person name="Bancroft I."/>
            <person name="Bent E."/>
            <person name="Love K."/>
            <person name="Goodman H.M."/>
            <person name="Dean C."/>
            <person name="Bergkamp R."/>
            <person name="Dirkse W."/>
            <person name="van Staveren M."/>
            <person name="Stiekema W."/>
            <person name="Drost L."/>
            <person name="Ridley P."/>
            <person name="Hudson S.-A."/>
            <person name="Patel K."/>
            <person name="Murphy G."/>
            <person name="Piffanelli P."/>
            <person name="Wedler H."/>
            <person name="Wedler E."/>
            <person name="Wambutt R."/>
            <person name="Weitzenegger T."/>
            <person name="Pohl T."/>
            <person name="Terryn N."/>
            <person name="Gielen J."/>
            <person name="Villarroel R."/>
            <person name="De Clercq R."/>
            <person name="van Montagu M."/>
            <person name="Lecharny A."/>
            <person name="Aubourg S."/>
            <person name="Gy I."/>
            <person name="Kreis M."/>
            <person name="Lao N."/>
            <person name="Kavanagh T."/>
            <person name="Hempel S."/>
            <person name="Kotter P."/>
            <person name="Entian K.-D."/>
            <person name="Rieger M."/>
            <person name="Schaefer M."/>
            <person name="Funk B."/>
            <person name="Mueller-Auer S."/>
            <person name="Silvey M."/>
            <person name="James R."/>
            <person name="Monfort A."/>
            <person name="Pons A."/>
            <person name="Puigdomenech P."/>
            <person name="Douka A."/>
            <person name="Voukelatou E."/>
            <person name="Milioni D."/>
            <person name="Hatzopoulos P."/>
            <person name="Piravandi E."/>
            <person name="Obermaier B."/>
            <person name="Hilbert H."/>
            <person name="Duesterhoeft A."/>
            <person name="Moores T."/>
            <person name="Jones J.D.G."/>
            <person name="Eneva T."/>
            <person name="Palme K."/>
            <person name="Benes V."/>
            <person name="Rechmann S."/>
            <person name="Ansorge W."/>
            <person name="Cooke R."/>
            <person name="Berger C."/>
            <person name="Delseny M."/>
            <person name="Voet M."/>
            <person name="Volckaert G."/>
            <person name="Mewes H.-W."/>
            <person name="Klosterman S."/>
            <person name="Schueller C."/>
            <person name="Chalwatzis N."/>
        </authorList>
    </citation>
    <scope>NUCLEOTIDE SEQUENCE [LARGE SCALE GENOMIC DNA]</scope>
    <source>
        <strain>cv. Columbia</strain>
    </source>
</reference>
<reference key="3">
    <citation type="journal article" date="1999" name="Nature">
        <title>Sequence and analysis of chromosome 4 of the plant Arabidopsis thaliana.</title>
        <authorList>
            <person name="Mayer K.F.X."/>
            <person name="Schueller C."/>
            <person name="Wambutt R."/>
            <person name="Murphy G."/>
            <person name="Volckaert G."/>
            <person name="Pohl T."/>
            <person name="Duesterhoeft A."/>
            <person name="Stiekema W."/>
            <person name="Entian K.-D."/>
            <person name="Terryn N."/>
            <person name="Harris B."/>
            <person name="Ansorge W."/>
            <person name="Brandt P."/>
            <person name="Grivell L.A."/>
            <person name="Rieger M."/>
            <person name="Weichselgartner M."/>
            <person name="de Simone V."/>
            <person name="Obermaier B."/>
            <person name="Mache R."/>
            <person name="Mueller M."/>
            <person name="Kreis M."/>
            <person name="Delseny M."/>
            <person name="Puigdomenech P."/>
            <person name="Watson M."/>
            <person name="Schmidtheini T."/>
            <person name="Reichert B."/>
            <person name="Portetelle D."/>
            <person name="Perez-Alonso M."/>
            <person name="Boutry M."/>
            <person name="Bancroft I."/>
            <person name="Vos P."/>
            <person name="Hoheisel J."/>
            <person name="Zimmermann W."/>
            <person name="Wedler H."/>
            <person name="Ridley P."/>
            <person name="Langham S.-A."/>
            <person name="McCullagh B."/>
            <person name="Bilham L."/>
            <person name="Robben J."/>
            <person name="van der Schueren J."/>
            <person name="Grymonprez B."/>
            <person name="Chuang Y.-J."/>
            <person name="Vandenbussche F."/>
            <person name="Braeken M."/>
            <person name="Weltjens I."/>
            <person name="Voet M."/>
            <person name="Bastiaens I."/>
            <person name="Aert R."/>
            <person name="Defoor E."/>
            <person name="Weitzenegger T."/>
            <person name="Bothe G."/>
            <person name="Ramsperger U."/>
            <person name="Hilbert H."/>
            <person name="Braun M."/>
            <person name="Holzer E."/>
            <person name="Brandt A."/>
            <person name="Peters S."/>
            <person name="van Staveren M."/>
            <person name="Dirkse W."/>
            <person name="Mooijman P."/>
            <person name="Klein Lankhorst R."/>
            <person name="Rose M."/>
            <person name="Hauf J."/>
            <person name="Koetter P."/>
            <person name="Berneiser S."/>
            <person name="Hempel S."/>
            <person name="Feldpausch M."/>
            <person name="Lamberth S."/>
            <person name="Van den Daele H."/>
            <person name="De Keyser A."/>
            <person name="Buysshaert C."/>
            <person name="Gielen J."/>
            <person name="Villarroel R."/>
            <person name="De Clercq R."/>
            <person name="van Montagu M."/>
            <person name="Rogers J."/>
            <person name="Cronin A."/>
            <person name="Quail M.A."/>
            <person name="Bray-Allen S."/>
            <person name="Clark L."/>
            <person name="Doggett J."/>
            <person name="Hall S."/>
            <person name="Kay M."/>
            <person name="Lennard N."/>
            <person name="McLay K."/>
            <person name="Mayes R."/>
            <person name="Pettett A."/>
            <person name="Rajandream M.A."/>
            <person name="Lyne M."/>
            <person name="Benes V."/>
            <person name="Rechmann S."/>
            <person name="Borkova D."/>
            <person name="Bloecker H."/>
            <person name="Scharfe M."/>
            <person name="Grimm M."/>
            <person name="Loehnert T.-H."/>
            <person name="Dose S."/>
            <person name="de Haan M."/>
            <person name="Maarse A.C."/>
            <person name="Schaefer M."/>
            <person name="Mueller-Auer S."/>
            <person name="Gabel C."/>
            <person name="Fuchs M."/>
            <person name="Fartmann B."/>
            <person name="Granderath K."/>
            <person name="Dauner D."/>
            <person name="Herzl A."/>
            <person name="Neumann S."/>
            <person name="Argiriou A."/>
            <person name="Vitale D."/>
            <person name="Liguori R."/>
            <person name="Piravandi E."/>
            <person name="Massenet O."/>
            <person name="Quigley F."/>
            <person name="Clabauld G."/>
            <person name="Muendlein A."/>
            <person name="Felber R."/>
            <person name="Schnabl S."/>
            <person name="Hiller R."/>
            <person name="Schmidt W."/>
            <person name="Lecharny A."/>
            <person name="Aubourg S."/>
            <person name="Chefdor F."/>
            <person name="Cooke R."/>
            <person name="Berger C."/>
            <person name="Monfort A."/>
            <person name="Casacuberta E."/>
            <person name="Gibbons T."/>
            <person name="Weber N."/>
            <person name="Vandenbol M."/>
            <person name="Bargues M."/>
            <person name="Terol J."/>
            <person name="Torres A."/>
            <person name="Perez-Perez A."/>
            <person name="Purnelle B."/>
            <person name="Bent E."/>
            <person name="Johnson S."/>
            <person name="Tacon D."/>
            <person name="Jesse T."/>
            <person name="Heijnen L."/>
            <person name="Schwarz S."/>
            <person name="Scholler P."/>
            <person name="Heber S."/>
            <person name="Francs P."/>
            <person name="Bielke C."/>
            <person name="Frishman D."/>
            <person name="Haase D."/>
            <person name="Lemcke K."/>
            <person name="Mewes H.-W."/>
            <person name="Stocker S."/>
            <person name="Zaccaria P."/>
            <person name="Bevan M."/>
            <person name="Wilson R.K."/>
            <person name="de la Bastide M."/>
            <person name="Habermann K."/>
            <person name="Parnell L."/>
            <person name="Dedhia N."/>
            <person name="Gnoj L."/>
            <person name="Schutz K."/>
            <person name="Huang E."/>
            <person name="Spiegel L."/>
            <person name="Sekhon M."/>
            <person name="Murray J."/>
            <person name="Sheet P."/>
            <person name="Cordes M."/>
            <person name="Abu-Threideh J."/>
            <person name="Stoneking T."/>
            <person name="Kalicki J."/>
            <person name="Graves T."/>
            <person name="Harmon G."/>
            <person name="Edwards J."/>
            <person name="Latreille P."/>
            <person name="Courtney L."/>
            <person name="Cloud J."/>
            <person name="Abbott A."/>
            <person name="Scott K."/>
            <person name="Johnson D."/>
            <person name="Minx P."/>
            <person name="Bentley D."/>
            <person name="Fulton B."/>
            <person name="Miller N."/>
            <person name="Greco T."/>
            <person name="Kemp K."/>
            <person name="Kramer J."/>
            <person name="Fulton L."/>
            <person name="Mardis E."/>
            <person name="Dante M."/>
            <person name="Pepin K."/>
            <person name="Hillier L.W."/>
            <person name="Nelson J."/>
            <person name="Spieth J."/>
            <person name="Ryan E."/>
            <person name="Andrews S."/>
            <person name="Geisel C."/>
            <person name="Layman D."/>
            <person name="Du H."/>
            <person name="Ali J."/>
            <person name="Berghoff A."/>
            <person name="Jones K."/>
            <person name="Drone K."/>
            <person name="Cotton M."/>
            <person name="Joshu C."/>
            <person name="Antonoiu B."/>
            <person name="Zidanic M."/>
            <person name="Strong C."/>
            <person name="Sun H."/>
            <person name="Lamar B."/>
            <person name="Yordan C."/>
            <person name="Ma P."/>
            <person name="Zhong J."/>
            <person name="Preston R."/>
            <person name="Vil D."/>
            <person name="Shekher M."/>
            <person name="Matero A."/>
            <person name="Shah R."/>
            <person name="Swaby I.K."/>
            <person name="O'Shaughnessy A."/>
            <person name="Rodriguez M."/>
            <person name="Hoffman J."/>
            <person name="Till S."/>
            <person name="Granat S."/>
            <person name="Shohdy N."/>
            <person name="Hasegawa A."/>
            <person name="Hameed A."/>
            <person name="Lodhi M."/>
            <person name="Johnson A."/>
            <person name="Chen E."/>
            <person name="Marra M.A."/>
            <person name="Martienssen R."/>
            <person name="McCombie W.R."/>
        </authorList>
    </citation>
    <scope>NUCLEOTIDE SEQUENCE [LARGE SCALE GENOMIC DNA]</scope>
    <source>
        <strain>cv. Columbia</strain>
    </source>
</reference>
<reference key="4">
    <citation type="journal article" date="2017" name="Plant J.">
        <title>Araport11: a complete reannotation of the Arabidopsis thaliana reference genome.</title>
        <authorList>
            <person name="Cheng C.Y."/>
            <person name="Krishnakumar V."/>
            <person name="Chan A.P."/>
            <person name="Thibaud-Nissen F."/>
            <person name="Schobel S."/>
            <person name="Town C.D."/>
        </authorList>
    </citation>
    <scope>GENOME REANNOTATION</scope>
    <source>
        <strain>cv. Columbia</strain>
    </source>
</reference>
<reference key="5">
    <citation type="journal article" date="2002" name="Science">
        <title>Functional annotation of a full-length Arabidopsis cDNA collection.</title>
        <authorList>
            <person name="Seki M."/>
            <person name="Narusaka M."/>
            <person name="Kamiya A."/>
            <person name="Ishida J."/>
            <person name="Satou M."/>
            <person name="Sakurai T."/>
            <person name="Nakajima M."/>
            <person name="Enju A."/>
            <person name="Akiyama K."/>
            <person name="Oono Y."/>
            <person name="Muramatsu M."/>
            <person name="Hayashizaki Y."/>
            <person name="Kawai J."/>
            <person name="Carninci P."/>
            <person name="Itoh M."/>
            <person name="Ishii Y."/>
            <person name="Arakawa T."/>
            <person name="Shibata K."/>
            <person name="Shinagawa A."/>
            <person name="Shinozaki K."/>
        </authorList>
    </citation>
    <scope>NUCLEOTIDE SEQUENCE [LARGE SCALE MRNA]</scope>
    <source>
        <strain>cv. Columbia</strain>
    </source>
</reference>
<reference key="6">
    <citation type="submission" date="2004-09" db="EMBL/GenBank/DDBJ databases">
        <title>Large-scale analysis of RIKEN Arabidopsis full-length (RAFL) cDNAs.</title>
        <authorList>
            <person name="Totoki Y."/>
            <person name="Seki M."/>
            <person name="Ishida J."/>
            <person name="Nakajima M."/>
            <person name="Enju A."/>
            <person name="Kamiya A."/>
            <person name="Narusaka M."/>
            <person name="Shin-i T."/>
            <person name="Nakagawa M."/>
            <person name="Sakamoto N."/>
            <person name="Oishi K."/>
            <person name="Kohara Y."/>
            <person name="Kobayashi M."/>
            <person name="Toyoda A."/>
            <person name="Sakaki Y."/>
            <person name="Sakurai T."/>
            <person name="Iida K."/>
            <person name="Akiyama K."/>
            <person name="Satou M."/>
            <person name="Toyoda T."/>
            <person name="Konagaya A."/>
            <person name="Carninci P."/>
            <person name="Kawai J."/>
            <person name="Hayashizaki Y."/>
            <person name="Shinozaki K."/>
        </authorList>
    </citation>
    <scope>NUCLEOTIDE SEQUENCE [LARGE SCALE MRNA]</scope>
    <source>
        <strain>cv. Columbia</strain>
    </source>
</reference>
<reference key="7">
    <citation type="journal article" date="2010" name="Nat. Chem. Biol.">
        <title>Ureide catabolism in Arabidopsis thaliana and Escherichia coli.</title>
        <authorList>
            <person name="Werner A.K."/>
            <person name="Romeis T."/>
            <person name="Witte C.P."/>
        </authorList>
    </citation>
    <scope>FUNCTION</scope>
    <scope>CATALYTIC ACTIVITY</scope>
</reference>
<reference key="8">
    <citation type="journal article" date="2012" name="J. Biol. Chem.">
        <title>Structural and functional insights into (S)-ureidoglycine aminohydrolase, key enzyme of purine catabolism in Arabidopsis thaliana.</title>
        <authorList>
            <person name="Shin I."/>
            <person name="Percudani R."/>
            <person name="Rhee S."/>
        </authorList>
    </citation>
    <scope>X-RAY CRYSTALLOGRAPHY (2.5 ANGSTROMS) OF 36-298 IN COMPLEX WITH SUBSTRATE AND MANGANESE</scope>
    <scope>FUNCTION</scope>
    <scope>CATALYTIC ACTIVITY</scope>
    <scope>SUBUNIT</scope>
    <scope>MUTAGENESIS OF HIS-221; GLU-235; HIS-237; HIS-241; TYR-252; GLN-275; TYR-287 AND LYS-291</scope>
    <scope>COFACTOR</scope>
    <scope>BIOPHYSICOCHEMICAL PROPERTIES</scope>
</reference>
<feature type="signal peptide" evidence="1">
    <location>
        <begin position="1"/>
        <end position="20"/>
    </location>
</feature>
<feature type="chain" id="PRO_0000423444" description="(S)-ureidoglycine aminohydrolase">
    <location>
        <begin position="21"/>
        <end position="298"/>
    </location>
</feature>
<feature type="domain" description="Cupin type-2" evidence="1">
    <location>
        <begin position="222"/>
        <end position="288"/>
    </location>
</feature>
<feature type="binding site" evidence="4">
    <location>
        <position position="235"/>
    </location>
    <ligand>
        <name>Mn(2+)</name>
        <dbReference type="ChEBI" id="CHEBI:29035"/>
    </ligand>
</feature>
<feature type="binding site" evidence="4">
    <location>
        <position position="235"/>
    </location>
    <ligand>
        <name>substrate</name>
    </ligand>
</feature>
<feature type="binding site" evidence="4">
    <location>
        <position position="237"/>
    </location>
    <ligand>
        <name>Mn(2+)</name>
        <dbReference type="ChEBI" id="CHEBI:29035"/>
    </ligand>
</feature>
<feature type="binding site" evidence="4">
    <location>
        <position position="241"/>
    </location>
    <ligand>
        <name>Mn(2+)</name>
        <dbReference type="ChEBI" id="CHEBI:29035"/>
    </ligand>
</feature>
<feature type="binding site" evidence="4">
    <location>
        <position position="275"/>
    </location>
    <ligand>
        <name>Mn(2+)</name>
        <dbReference type="ChEBI" id="CHEBI:29035"/>
    </ligand>
</feature>
<feature type="binding site" evidence="4">
    <location>
        <position position="275"/>
    </location>
    <ligand>
        <name>substrate</name>
    </ligand>
</feature>
<feature type="binding site" evidence="4">
    <location>
        <position position="287"/>
    </location>
    <ligand>
        <name>substrate</name>
    </ligand>
</feature>
<feature type="binding site" evidence="4">
    <location>
        <position position="291"/>
    </location>
    <ligand>
        <name>substrate</name>
    </ligand>
</feature>
<feature type="mutagenesis site" description="Decreased activity." evidence="4">
    <original>H</original>
    <variation>A</variation>
    <location>
        <position position="221"/>
    </location>
</feature>
<feature type="mutagenesis site" description="Loss of manganese binding and loss of activity." evidence="4">
    <original>E</original>
    <variation>A</variation>
    <location>
        <position position="235"/>
    </location>
</feature>
<feature type="mutagenesis site" description="No effect on manganese binding, but loss of activity." evidence="4">
    <original>E</original>
    <variation>Q</variation>
    <location>
        <position position="235"/>
    </location>
</feature>
<feature type="mutagenesis site" description="Loss of activity." evidence="4">
    <original>H</original>
    <variation>A</variation>
    <location>
        <position position="237"/>
    </location>
</feature>
<feature type="mutagenesis site" description="Loss of activity." evidence="4">
    <original>H</original>
    <variation>A</variation>
    <location>
        <position position="241"/>
    </location>
</feature>
<feature type="mutagenesis site" description="No effect on the affinity for the substrate, but decreased activity." evidence="4">
    <original>Y</original>
    <variation>F</variation>
    <location>
        <position position="252"/>
    </location>
</feature>
<feature type="mutagenesis site" description="Loss of activity." evidence="4">
    <original>Q</original>
    <variation>A</variation>
    <location>
        <position position="275"/>
    </location>
</feature>
<feature type="mutagenesis site" description="Loss of activity." evidence="4">
    <original>Y</original>
    <variation>A</variation>
    <variation>F</variation>
    <location>
        <position position="287"/>
    </location>
</feature>
<feature type="mutagenesis site" description="Loss of activity." evidence="4">
    <original>K</original>
    <variation>A</variation>
    <location>
        <position position="291"/>
    </location>
</feature>
<feature type="mutagenesis site" description="Increased affinity for the substrate, but decreased activity." evidence="4">
    <original>K</original>
    <variation>R</variation>
    <location>
        <position position="291"/>
    </location>
</feature>
<feature type="sequence conflict" description="In Ref. 6; BAD44550." evidence="6" ref="6">
    <original>T</original>
    <variation>S</variation>
    <location>
        <position position="138"/>
    </location>
</feature>
<feature type="sequence conflict" description="In Ref. 6; BAD43635." evidence="6" ref="6">
    <original>D</original>
    <variation>G</variation>
    <location>
        <position position="224"/>
    </location>
</feature>
<feature type="helix" evidence="7">
    <location>
        <begin position="42"/>
        <end position="44"/>
    </location>
</feature>
<feature type="helix" evidence="7">
    <location>
        <begin position="51"/>
        <end position="54"/>
    </location>
</feature>
<feature type="strand" evidence="7">
    <location>
        <begin position="67"/>
        <end position="72"/>
    </location>
</feature>
<feature type="helix" evidence="7">
    <location>
        <begin position="74"/>
        <end position="76"/>
    </location>
</feature>
<feature type="strand" evidence="7">
    <location>
        <begin position="85"/>
        <end position="94"/>
    </location>
</feature>
<feature type="helix" evidence="7">
    <location>
        <begin position="96"/>
        <end position="98"/>
    </location>
</feature>
<feature type="strand" evidence="7">
    <location>
        <begin position="101"/>
        <end position="109"/>
    </location>
</feature>
<feature type="strand" evidence="7">
    <location>
        <begin position="111"/>
        <end position="114"/>
    </location>
</feature>
<feature type="strand" evidence="7">
    <location>
        <begin position="122"/>
        <end position="131"/>
    </location>
</feature>
<feature type="strand" evidence="7">
    <location>
        <begin position="133"/>
        <end position="136"/>
    </location>
</feature>
<feature type="strand" evidence="7">
    <location>
        <begin position="143"/>
        <end position="145"/>
    </location>
</feature>
<feature type="strand" evidence="7">
    <location>
        <begin position="149"/>
        <end position="153"/>
    </location>
</feature>
<feature type="strand" evidence="7">
    <location>
        <begin position="160"/>
        <end position="165"/>
    </location>
</feature>
<feature type="strand" evidence="7">
    <location>
        <begin position="167"/>
        <end position="175"/>
    </location>
</feature>
<feature type="strand" evidence="7">
    <location>
        <begin position="187"/>
        <end position="190"/>
    </location>
</feature>
<feature type="helix" evidence="7">
    <location>
        <begin position="191"/>
        <end position="193"/>
    </location>
</feature>
<feature type="strand" evidence="7">
    <location>
        <begin position="204"/>
        <end position="210"/>
    </location>
</feature>
<feature type="strand" evidence="7">
    <location>
        <begin position="217"/>
        <end position="225"/>
    </location>
</feature>
<feature type="strand" evidence="7">
    <location>
        <begin position="241"/>
        <end position="247"/>
    </location>
</feature>
<feature type="strand" evidence="7">
    <location>
        <begin position="249"/>
        <end position="254"/>
    </location>
</feature>
<feature type="strand" evidence="7">
    <location>
        <begin position="257"/>
        <end position="262"/>
    </location>
</feature>
<feature type="strand" evidence="7">
    <location>
        <begin position="266"/>
        <end position="269"/>
    </location>
</feature>
<feature type="strand" evidence="7">
    <location>
        <begin position="275"/>
        <end position="283"/>
    </location>
</feature>
<feature type="strand" evidence="7">
    <location>
        <begin position="285"/>
        <end position="292"/>
    </location>
</feature>
<protein>
    <recommendedName>
        <fullName evidence="5">(S)-ureidoglycine aminohydrolase</fullName>
        <shortName>AtUGLYAH</shortName>
        <ecNumber evidence="2 3 4">3.5.3.26</ecNumber>
    </recommendedName>
</protein>
<organism>
    <name type="scientific">Arabidopsis thaliana</name>
    <name type="common">Mouse-ear cress</name>
    <dbReference type="NCBI Taxonomy" id="3702"/>
    <lineage>
        <taxon>Eukaryota</taxon>
        <taxon>Viridiplantae</taxon>
        <taxon>Streptophyta</taxon>
        <taxon>Embryophyta</taxon>
        <taxon>Tracheophyta</taxon>
        <taxon>Spermatophyta</taxon>
        <taxon>Magnoliopsida</taxon>
        <taxon>eudicotyledons</taxon>
        <taxon>Gunneridae</taxon>
        <taxon>Pentapetalae</taxon>
        <taxon>rosids</taxon>
        <taxon>malvids</taxon>
        <taxon>Brassicales</taxon>
        <taxon>Brassicaceae</taxon>
        <taxon>Camelineae</taxon>
        <taxon>Arabidopsis</taxon>
    </lineage>
</organism>
<proteinExistence type="evidence at protein level"/>
<sequence length="298" mass="33673">MRSLYLIVFIVISLVKASKSDDGFCSAPSIVESDEKTNPIYWKATNPTLSPSHLQDLPGFTRSVYKRDHALITPESHVYSPLPDWTNTLGAYLITPATGSHFVMYLAKMKEMSSSGLPPQDIERLIFVVEGAVTLTNTSSSSKKLTVDSYAYLPPNFHHSLDCVESATLVVFERRYEYLGSHTTELIVGSTDKQPLLETPGEVFELRKLLPMSVAYDFNIHTMDFQPGEFLNVKEVHYNQHGLLLLEGQGIYRLGDNWYPVQAGDVIWMAPFVPQWYAALGKTRSRYLLYKDVNRNPL</sequence>
<comment type="function">
    <text evidence="2 3 4">Involved in the catabolism of purine nucleotides. Can use (S)-2-ureidoglycine as substrate, but not allantoate. The sequential activity of AAH, UGLYAH and UAH allows a complete purine breakdown without the intermediate generation of urea.</text>
</comment>
<comment type="catalytic activity">
    <reaction evidence="2 3 4">
        <text>(S)-2-ureidoglycine + H2O = (S)-ureidoglycolate + NH4(+)</text>
        <dbReference type="Rhea" id="RHEA:25241"/>
        <dbReference type="ChEBI" id="CHEBI:15377"/>
        <dbReference type="ChEBI" id="CHEBI:28938"/>
        <dbReference type="ChEBI" id="CHEBI:57296"/>
        <dbReference type="ChEBI" id="CHEBI:59947"/>
        <dbReference type="EC" id="3.5.3.26"/>
    </reaction>
</comment>
<comment type="cofactor">
    <cofactor evidence="3 4">
        <name>Mn(2+)</name>
        <dbReference type="ChEBI" id="CHEBI:29035"/>
    </cofactor>
</comment>
<comment type="biophysicochemical properties">
    <kinetics>
        <KM evidence="4">1.77 mM for (S)-2-ureidoglycine</KM>
        <text>kcat is 761 sec(-1) for (S)-2-ureidoglycine.</text>
    </kinetics>
</comment>
<comment type="subunit">
    <text evidence="4">Homooctamer.</text>
</comment>
<comment type="subcellular location">
    <subcellularLocation>
        <location evidence="3">Endoplasmic reticulum</location>
    </subcellularLocation>
</comment>
<comment type="similarity">
    <text evidence="6">Belongs to the UGHY family.</text>
</comment>
<comment type="sequence caution" evidence="6">
    <conflict type="erroneous gene model prediction">
        <sequence resource="EMBL-CDS" id="CAB10485"/>
    </conflict>
</comment>
<comment type="sequence caution" evidence="6">
    <conflict type="erroneous gene model prediction">
        <sequence resource="EMBL-CDS" id="CAB80976"/>
    </conflict>
</comment>
<accession>Q8GXV5</accession>
<accession>O23549</accession>
<accession>Q67XN1</accession>
<accession>Q680J5</accession>